<feature type="chain" id="PRO_1000136777" description="Ribosome maturation factor RimP">
    <location>
        <begin position="1"/>
        <end position="156"/>
    </location>
</feature>
<sequence>MSKVPSLIEELAKPIVDELNLELVDIEFVKEGRNWFLRVYVDTPEGGIDIDQCAQVSERLSLLLDEKDPITQNYYLEVSSPGAERPLKKDADFEKAIGKFIYVKTYKPIKDMKEFQGYLTSYEEHTLVMEVRIKTRKITVTIEQEKIALARLAIDF</sequence>
<evidence type="ECO:0000255" key="1">
    <source>
        <dbReference type="HAMAP-Rule" id="MF_01077"/>
    </source>
</evidence>
<dbReference type="EMBL" id="CP000817">
    <property type="protein sequence ID" value="ACA39192.1"/>
    <property type="molecule type" value="Genomic_DNA"/>
</dbReference>
<dbReference type="RefSeq" id="WP_012293301.1">
    <property type="nucleotide sequence ID" value="NC_010382.1"/>
</dbReference>
<dbReference type="SMR" id="B1HR01"/>
<dbReference type="EnsemblBacteria" id="ACA39192">
    <property type="protein sequence ID" value="ACA39192"/>
    <property type="gene ID" value="Bsph_1594"/>
</dbReference>
<dbReference type="KEGG" id="lsp:Bsph_1594"/>
<dbReference type="HOGENOM" id="CLU_070525_2_0_9"/>
<dbReference type="Proteomes" id="UP000002164">
    <property type="component" value="Chromosome"/>
</dbReference>
<dbReference type="GO" id="GO:0005829">
    <property type="term" value="C:cytosol"/>
    <property type="evidence" value="ECO:0007669"/>
    <property type="project" value="TreeGrafter"/>
</dbReference>
<dbReference type="GO" id="GO:0000028">
    <property type="term" value="P:ribosomal small subunit assembly"/>
    <property type="evidence" value="ECO:0007669"/>
    <property type="project" value="TreeGrafter"/>
</dbReference>
<dbReference type="GO" id="GO:0006412">
    <property type="term" value="P:translation"/>
    <property type="evidence" value="ECO:0007669"/>
    <property type="project" value="TreeGrafter"/>
</dbReference>
<dbReference type="CDD" id="cd01734">
    <property type="entry name" value="YlxS_C"/>
    <property type="match status" value="1"/>
</dbReference>
<dbReference type="FunFam" id="3.30.300.70:FF:000001">
    <property type="entry name" value="Ribosome maturation factor RimP"/>
    <property type="match status" value="1"/>
</dbReference>
<dbReference type="Gene3D" id="2.30.30.180">
    <property type="entry name" value="Ribosome maturation factor RimP, C-terminal domain"/>
    <property type="match status" value="1"/>
</dbReference>
<dbReference type="Gene3D" id="3.30.300.70">
    <property type="entry name" value="RimP-like superfamily, N-terminal"/>
    <property type="match status" value="1"/>
</dbReference>
<dbReference type="HAMAP" id="MF_01077">
    <property type="entry name" value="RimP"/>
    <property type="match status" value="1"/>
</dbReference>
<dbReference type="InterPro" id="IPR003728">
    <property type="entry name" value="Ribosome_maturation_RimP"/>
</dbReference>
<dbReference type="InterPro" id="IPR028998">
    <property type="entry name" value="RimP_C"/>
</dbReference>
<dbReference type="InterPro" id="IPR036847">
    <property type="entry name" value="RimP_C_sf"/>
</dbReference>
<dbReference type="InterPro" id="IPR028989">
    <property type="entry name" value="RimP_N"/>
</dbReference>
<dbReference type="InterPro" id="IPR035956">
    <property type="entry name" value="RimP_N_sf"/>
</dbReference>
<dbReference type="NCBIfam" id="NF000928">
    <property type="entry name" value="PRK00092.1-2"/>
    <property type="match status" value="1"/>
</dbReference>
<dbReference type="PANTHER" id="PTHR33867">
    <property type="entry name" value="RIBOSOME MATURATION FACTOR RIMP"/>
    <property type="match status" value="1"/>
</dbReference>
<dbReference type="PANTHER" id="PTHR33867:SF1">
    <property type="entry name" value="RIBOSOME MATURATION FACTOR RIMP"/>
    <property type="match status" value="1"/>
</dbReference>
<dbReference type="Pfam" id="PF17384">
    <property type="entry name" value="DUF150_C"/>
    <property type="match status" value="1"/>
</dbReference>
<dbReference type="Pfam" id="PF02576">
    <property type="entry name" value="RimP_N"/>
    <property type="match status" value="1"/>
</dbReference>
<dbReference type="SUPFAM" id="SSF74942">
    <property type="entry name" value="YhbC-like, C-terminal domain"/>
    <property type="match status" value="1"/>
</dbReference>
<dbReference type="SUPFAM" id="SSF75420">
    <property type="entry name" value="YhbC-like, N-terminal domain"/>
    <property type="match status" value="1"/>
</dbReference>
<protein>
    <recommendedName>
        <fullName evidence="1">Ribosome maturation factor RimP</fullName>
    </recommendedName>
</protein>
<gene>
    <name evidence="1" type="primary">rimP</name>
    <name type="ordered locus">Bsph_1594</name>
</gene>
<name>RIMP_LYSSC</name>
<keyword id="KW-0963">Cytoplasm</keyword>
<keyword id="KW-0690">Ribosome biogenesis</keyword>
<comment type="function">
    <text evidence="1">Required for maturation of 30S ribosomal subunits.</text>
</comment>
<comment type="subcellular location">
    <subcellularLocation>
        <location evidence="1">Cytoplasm</location>
    </subcellularLocation>
</comment>
<comment type="similarity">
    <text evidence="1">Belongs to the RimP family.</text>
</comment>
<proteinExistence type="inferred from homology"/>
<reference key="1">
    <citation type="journal article" date="2008" name="J. Bacteriol.">
        <title>Complete genome sequence of the mosquitocidal bacterium Bacillus sphaericus C3-41 and comparison with those of closely related Bacillus species.</title>
        <authorList>
            <person name="Hu X."/>
            <person name="Fan W."/>
            <person name="Han B."/>
            <person name="Liu H."/>
            <person name="Zheng D."/>
            <person name="Li Q."/>
            <person name="Dong W."/>
            <person name="Yan J."/>
            <person name="Gao M."/>
            <person name="Berry C."/>
            <person name="Yuan Z."/>
        </authorList>
    </citation>
    <scope>NUCLEOTIDE SEQUENCE [LARGE SCALE GENOMIC DNA]</scope>
    <source>
        <strain>C3-41</strain>
    </source>
</reference>
<organism>
    <name type="scientific">Lysinibacillus sphaericus (strain C3-41)</name>
    <dbReference type="NCBI Taxonomy" id="444177"/>
    <lineage>
        <taxon>Bacteria</taxon>
        <taxon>Bacillati</taxon>
        <taxon>Bacillota</taxon>
        <taxon>Bacilli</taxon>
        <taxon>Bacillales</taxon>
        <taxon>Bacillaceae</taxon>
        <taxon>Lysinibacillus</taxon>
    </lineage>
</organism>
<accession>B1HR01</accession>